<accession>Q6CMF1</accession>
<organism>
    <name type="scientific">Kluyveromyces lactis (strain ATCC 8585 / CBS 2359 / DSM 70799 / NBRC 1267 / NRRL Y-1140 / WM37)</name>
    <name type="common">Yeast</name>
    <name type="synonym">Candida sphaerica</name>
    <dbReference type="NCBI Taxonomy" id="284590"/>
    <lineage>
        <taxon>Eukaryota</taxon>
        <taxon>Fungi</taxon>
        <taxon>Dikarya</taxon>
        <taxon>Ascomycota</taxon>
        <taxon>Saccharomycotina</taxon>
        <taxon>Saccharomycetes</taxon>
        <taxon>Saccharomycetales</taxon>
        <taxon>Saccharomycetaceae</taxon>
        <taxon>Kluyveromyces</taxon>
    </lineage>
</organism>
<keyword id="KW-0256">Endoplasmic reticulum</keyword>
<keyword id="KW-0328">Glycosyltransferase</keyword>
<keyword id="KW-0472">Membrane</keyword>
<keyword id="KW-1185">Reference proteome</keyword>
<keyword id="KW-0808">Transferase</keyword>
<keyword id="KW-0812">Transmembrane</keyword>
<keyword id="KW-1133">Transmembrane helix</keyword>
<sequence>MVEEGANKTVGAPTVGDDQQPKEFVRPPFTPFQDILDAFNYLMWNPEANAIAMPVLILLESIAMKFIQNKVSYTEIDYTAYMEQIWMIQNGERDYSQIKGGTGPLVYPAGHVFIYKIFEWVSDGLENISEAQDLFRYLYVITLMIQFMCFGLLNIPPGYAIFAILSKRLHSVYVLRLFNDCFTTLFMSLAVLVMILCAKYKIRGFLVLIGSSFYSMAVSIKMNALLYLPGVLLTIYLLERCNTFKIVLNLAVMVIWQVIIAIPFWKEYPWEYLQSAFNFSRQFMYKWSVNWQMVDEEVFLDPLFHRSLLISHVIVLVVFLFYKLIPTNMNTPAGLLKIGKANLLHPFTDAVFSAMRVNAEQIAYILLVTNYIGVLFARSLHYQFLSWYHWTLPVLLNWANVPYPLCVLWYLTHEWCWNSYPPNATASTLLHACNTSLLLAVFLRGPANSKSGDNETTHEKAE</sequence>
<dbReference type="EC" id="2.4.1.258" evidence="1"/>
<dbReference type="EMBL" id="CR382125">
    <property type="protein sequence ID" value="CAG99975.1"/>
    <property type="molecule type" value="Genomic_DNA"/>
</dbReference>
<dbReference type="RefSeq" id="XP_454888.1">
    <property type="nucleotide sequence ID" value="XM_454888.1"/>
</dbReference>
<dbReference type="FunCoup" id="Q6CMF1">
    <property type="interactions" value="690"/>
</dbReference>
<dbReference type="STRING" id="284590.Q6CMF1"/>
<dbReference type="CAZy" id="GT58">
    <property type="family name" value="Glycosyltransferase Family 58"/>
</dbReference>
<dbReference type="PaxDb" id="284590-Q6CMF1"/>
<dbReference type="KEGG" id="kla:KLLA0_E20747g"/>
<dbReference type="eggNOG" id="KOG2762">
    <property type="taxonomic scope" value="Eukaryota"/>
</dbReference>
<dbReference type="HOGENOM" id="CLU_035382_3_0_1"/>
<dbReference type="InParanoid" id="Q6CMF1"/>
<dbReference type="OMA" id="PERYGIH"/>
<dbReference type="UniPathway" id="UPA00378"/>
<dbReference type="Proteomes" id="UP000000598">
    <property type="component" value="Chromosome E"/>
</dbReference>
<dbReference type="GO" id="GO:0005789">
    <property type="term" value="C:endoplasmic reticulum membrane"/>
    <property type="evidence" value="ECO:0007669"/>
    <property type="project" value="UniProtKB-SubCell"/>
</dbReference>
<dbReference type="GO" id="GO:0052925">
    <property type="term" value="F:dol-P-Man:Man(5)GlcNAc(2)-PP-Dol alpha-1,3-mannosyltransferase activity"/>
    <property type="evidence" value="ECO:0007669"/>
    <property type="project" value="UniProtKB-EC"/>
</dbReference>
<dbReference type="GO" id="GO:0006486">
    <property type="term" value="P:protein glycosylation"/>
    <property type="evidence" value="ECO:0007669"/>
    <property type="project" value="UniProtKB-UniPathway"/>
</dbReference>
<dbReference type="InterPro" id="IPR007873">
    <property type="entry name" value="Glycosyltransferase_ALG3"/>
</dbReference>
<dbReference type="PANTHER" id="PTHR12646:SF0">
    <property type="entry name" value="DOL-P-MAN:MAN(5)GLCNAC(2)-PP-DOL ALPHA-1,3-MANNOSYLTRANSFERASE"/>
    <property type="match status" value="1"/>
</dbReference>
<dbReference type="PANTHER" id="PTHR12646">
    <property type="entry name" value="NOT56 - RELATED"/>
    <property type="match status" value="1"/>
</dbReference>
<dbReference type="Pfam" id="PF05208">
    <property type="entry name" value="ALG3"/>
    <property type="match status" value="1"/>
</dbReference>
<feature type="chain" id="PRO_0000350927" description="Dol-P-Man:Man(5)GlcNAc(2)-PP-Dol alpha-1,3-mannosyltransferase">
    <location>
        <begin position="1"/>
        <end position="462"/>
    </location>
</feature>
<feature type="topological domain" description="Lumenal" evidence="2">
    <location>
        <begin position="1"/>
        <end position="144"/>
    </location>
</feature>
<feature type="transmembrane region" description="Helical" evidence="2">
    <location>
        <begin position="145"/>
        <end position="165"/>
    </location>
</feature>
<feature type="topological domain" description="Cytoplasmic" evidence="2">
    <location>
        <begin position="166"/>
        <end position="176"/>
    </location>
</feature>
<feature type="transmembrane region" description="Helical" evidence="2">
    <location>
        <begin position="177"/>
        <end position="197"/>
    </location>
</feature>
<feature type="topological domain" description="Lumenal" evidence="2">
    <location>
        <begin position="198"/>
        <end position="217"/>
    </location>
</feature>
<feature type="transmembrane region" description="Helical" evidence="2">
    <location>
        <begin position="218"/>
        <end position="238"/>
    </location>
</feature>
<feature type="topological domain" description="Cytoplasmic" evidence="2">
    <location>
        <begin position="239"/>
        <end position="243"/>
    </location>
</feature>
<feature type="transmembrane region" description="Helical" evidence="2">
    <location>
        <begin position="244"/>
        <end position="264"/>
    </location>
</feature>
<feature type="topological domain" description="Lumenal" evidence="2">
    <location>
        <begin position="265"/>
        <end position="306"/>
    </location>
</feature>
<feature type="transmembrane region" description="Helical" evidence="2">
    <location>
        <begin position="307"/>
        <end position="327"/>
    </location>
</feature>
<feature type="topological domain" description="Cytoplasmic" evidence="2">
    <location>
        <begin position="328"/>
        <end position="356"/>
    </location>
</feature>
<feature type="transmembrane region" description="Helical" evidence="2">
    <location>
        <begin position="357"/>
        <end position="377"/>
    </location>
</feature>
<feature type="topological domain" description="Lumenal" evidence="2">
    <location>
        <begin position="378"/>
        <end position="390"/>
    </location>
</feature>
<feature type="transmembrane region" description="Helical" evidence="2">
    <location>
        <begin position="391"/>
        <end position="411"/>
    </location>
</feature>
<feature type="topological domain" description="Cytoplasmic" evidence="2">
    <location>
        <begin position="412"/>
        <end position="462"/>
    </location>
</feature>
<feature type="region of interest" description="Disordered" evidence="3">
    <location>
        <begin position="1"/>
        <end position="21"/>
    </location>
</feature>
<comment type="function">
    <text evidence="1">Dol-P-Man:Man(5)GlcNAc(2)-PP-Dol alpha-1,3-mannosyltransferase that operates in the biosynthetic pathway of dolichol-linked oligosaccharides, the glycan precursors employed in protein asparagine (N)-glycosylation. The assembly of dolichol-linked oligosaccharides begins on the cytosolic side of the endoplasmic reticulum membrane and finishes in its lumen. The sequential addition of sugars to dolichol pyrophosphate produces dolichol-linked oligosaccharides containing fourteen sugars, including two GlcNAcs, nine mannoses and three glucoses. Once assembled, the oligosaccharide is transferred from the lipid to nascent proteins by oligosaccharyltransferases. In the lumen of the endoplasmic reticulum, adds the first dolichyl beta-D-mannosyl phosphate derived mannose in an alpha-1,3 linkage to Man(5)GlcNAc(2)-PP-dolichol to produce Man(6)GlcNAc(2)-PP-dolichol.</text>
</comment>
<comment type="catalytic activity">
    <reaction evidence="1">
        <text>an alpha-D-Man-(1-&gt;2)-alpha-D-Man-(1-&gt;2)-alpha-D-Man-(1-&gt;3)-[alpha-D-Man-(1-&gt;6)]-beta-D-Man-(1-&gt;4)-beta-D-GlcNAc-(1-&gt;4)-alpha-D-GlcNAc-diphospho-di-trans,poly-cis-dolichol + a di-trans,poly-cis-dolichyl beta-D-mannosyl phosphate = an alpha-D-Man-(1-&gt;2)-alpha-D-Man-(1-&gt;2)-alpha-D-Man-(1-&gt;3)-[alpha-D-Man-(1-&gt;3)-alpha-D-Man-(1-&gt;6)]-beta-D-Man-(1-&gt;4)-beta-D-GlcNAc-(1-&gt;4)-alpha-D-GlcNAc-diphospho-di-trans,poly-cis-dolichol + a di-trans,poly-cis-dolichyl phosphate + H(+)</text>
        <dbReference type="Rhea" id="RHEA:29527"/>
        <dbReference type="Rhea" id="RHEA-COMP:19498"/>
        <dbReference type="Rhea" id="RHEA-COMP:19501"/>
        <dbReference type="Rhea" id="RHEA-COMP:19516"/>
        <dbReference type="Rhea" id="RHEA-COMP:19517"/>
        <dbReference type="ChEBI" id="CHEBI:15378"/>
        <dbReference type="ChEBI" id="CHEBI:57683"/>
        <dbReference type="ChEBI" id="CHEBI:58211"/>
        <dbReference type="ChEBI" id="CHEBI:132515"/>
        <dbReference type="ChEBI" id="CHEBI:132516"/>
        <dbReference type="EC" id="2.4.1.258"/>
    </reaction>
    <physiologicalReaction direction="left-to-right" evidence="1">
        <dbReference type="Rhea" id="RHEA:29528"/>
    </physiologicalReaction>
</comment>
<comment type="pathway">
    <text evidence="1">Protein modification; protein glycosylation.</text>
</comment>
<comment type="subcellular location">
    <subcellularLocation>
        <location evidence="1">Endoplasmic reticulum membrane</location>
        <topology evidence="2">Multi-pass membrane protein</topology>
    </subcellularLocation>
</comment>
<comment type="similarity">
    <text evidence="4">Belongs to the glycosyltransferase ALG3 family.</text>
</comment>
<proteinExistence type="inferred from homology"/>
<gene>
    <name type="primary">ALG3</name>
    <name type="ordered locus">KLLA0E20823g</name>
</gene>
<reference key="1">
    <citation type="journal article" date="2004" name="Nature">
        <title>Genome evolution in yeasts.</title>
        <authorList>
            <person name="Dujon B."/>
            <person name="Sherman D."/>
            <person name="Fischer G."/>
            <person name="Durrens P."/>
            <person name="Casaregola S."/>
            <person name="Lafontaine I."/>
            <person name="de Montigny J."/>
            <person name="Marck C."/>
            <person name="Neuveglise C."/>
            <person name="Talla E."/>
            <person name="Goffard N."/>
            <person name="Frangeul L."/>
            <person name="Aigle M."/>
            <person name="Anthouard V."/>
            <person name="Babour A."/>
            <person name="Barbe V."/>
            <person name="Barnay S."/>
            <person name="Blanchin S."/>
            <person name="Beckerich J.-M."/>
            <person name="Beyne E."/>
            <person name="Bleykasten C."/>
            <person name="Boisrame A."/>
            <person name="Boyer J."/>
            <person name="Cattolico L."/>
            <person name="Confanioleri F."/>
            <person name="de Daruvar A."/>
            <person name="Despons L."/>
            <person name="Fabre E."/>
            <person name="Fairhead C."/>
            <person name="Ferry-Dumazet H."/>
            <person name="Groppi A."/>
            <person name="Hantraye F."/>
            <person name="Hennequin C."/>
            <person name="Jauniaux N."/>
            <person name="Joyet P."/>
            <person name="Kachouri R."/>
            <person name="Kerrest A."/>
            <person name="Koszul R."/>
            <person name="Lemaire M."/>
            <person name="Lesur I."/>
            <person name="Ma L."/>
            <person name="Muller H."/>
            <person name="Nicaud J.-M."/>
            <person name="Nikolski M."/>
            <person name="Oztas S."/>
            <person name="Ozier-Kalogeropoulos O."/>
            <person name="Pellenz S."/>
            <person name="Potier S."/>
            <person name="Richard G.-F."/>
            <person name="Straub M.-L."/>
            <person name="Suleau A."/>
            <person name="Swennen D."/>
            <person name="Tekaia F."/>
            <person name="Wesolowski-Louvel M."/>
            <person name="Westhof E."/>
            <person name="Wirth B."/>
            <person name="Zeniou-Meyer M."/>
            <person name="Zivanovic Y."/>
            <person name="Bolotin-Fukuhara M."/>
            <person name="Thierry A."/>
            <person name="Bouchier C."/>
            <person name="Caudron B."/>
            <person name="Scarpelli C."/>
            <person name="Gaillardin C."/>
            <person name="Weissenbach J."/>
            <person name="Wincker P."/>
            <person name="Souciet J.-L."/>
        </authorList>
    </citation>
    <scope>NUCLEOTIDE SEQUENCE [LARGE SCALE GENOMIC DNA]</scope>
    <source>
        <strain>ATCC 8585 / CBS 2359 / DSM 70799 / NBRC 1267 / NRRL Y-1140 / WM37</strain>
    </source>
</reference>
<evidence type="ECO:0000250" key="1">
    <source>
        <dbReference type="UniProtKB" id="P38179"/>
    </source>
</evidence>
<evidence type="ECO:0000255" key="2"/>
<evidence type="ECO:0000256" key="3">
    <source>
        <dbReference type="SAM" id="MobiDB-lite"/>
    </source>
</evidence>
<evidence type="ECO:0000305" key="4"/>
<protein>
    <recommendedName>
        <fullName evidence="1">Dol-P-Man:Man(5)GlcNAc(2)-PP-Dol alpha-1,3-mannosyltransferase</fullName>
        <ecNumber evidence="1">2.4.1.258</ecNumber>
    </recommendedName>
    <alternativeName>
        <fullName>Asparagine-linked glycosylation protein 6</fullName>
    </alternativeName>
    <alternativeName>
        <fullName>Dol-P-Man-dependent alpha(1-3)-mannosyltransferase</fullName>
    </alternativeName>
    <alternativeName>
        <fullName>Dolichyl-P-Man:Man(5)GlcNAc(2)-PP-dolichyl mannosyltransferase</fullName>
    </alternativeName>
</protein>
<name>ALG3_KLULA</name>